<comment type="function">
    <text evidence="1 4">Protein-lysine N-methyltransferase. Monomethylates 'Lys-310' of the RELA subunit of NF-kappa-B complex, leading to down-regulation of NF-kappa-B transcription factor activity. Monomethylates 'Lys-8' of H2AZ (H2AZK8me1) (By similarity). Required for the maintenance of embryonic stem cell self-renewal (PubMed:23324626). Methylates PAK4.</text>
</comment>
<comment type="catalytic activity">
    <reaction evidence="1">
        <text>L-lysyl-[protein] + S-adenosyl-L-methionine = N(6)-methyl-L-lysyl-[protein] + S-adenosyl-L-homocysteine + H(+)</text>
        <dbReference type="Rhea" id="RHEA:51736"/>
        <dbReference type="Rhea" id="RHEA-COMP:9752"/>
        <dbReference type="Rhea" id="RHEA-COMP:13053"/>
        <dbReference type="ChEBI" id="CHEBI:15378"/>
        <dbReference type="ChEBI" id="CHEBI:29969"/>
        <dbReference type="ChEBI" id="CHEBI:57856"/>
        <dbReference type="ChEBI" id="CHEBI:59789"/>
        <dbReference type="ChEBI" id="CHEBI:61929"/>
    </reaction>
    <physiologicalReaction direction="left-to-right" evidence="1">
        <dbReference type="Rhea" id="RHEA:51737"/>
    </physiologicalReaction>
</comment>
<comment type="catalytic activity">
    <reaction evidence="1">
        <text>L-lysyl(8)-[histone H2AZ] + S-adenosyl-L-methionine = N(6)-methyl-L-lysyl(8)-[histone H2AZ] + S-adenosyl-L-homocysteine + H(+)</text>
        <dbReference type="Rhea" id="RHEA:67808"/>
        <dbReference type="Rhea" id="RHEA-COMP:17357"/>
        <dbReference type="Rhea" id="RHEA-COMP:17358"/>
        <dbReference type="ChEBI" id="CHEBI:15378"/>
        <dbReference type="ChEBI" id="CHEBI:29969"/>
        <dbReference type="ChEBI" id="CHEBI:57856"/>
        <dbReference type="ChEBI" id="CHEBI:59789"/>
        <dbReference type="ChEBI" id="CHEBI:61929"/>
    </reaction>
    <physiologicalReaction direction="left-to-right" evidence="1">
        <dbReference type="Rhea" id="RHEA:67809"/>
    </physiologicalReaction>
</comment>
<comment type="subunit">
    <text evidence="1">Monomer, homodimer and homotrimer; these structures are stabilized in the presence of S-adenosyl-L-methionine (SAM).</text>
</comment>
<comment type="interaction">
    <interactant intactId="EBI-10768425">
        <id>Q9CWY3</id>
    </interactant>
    <interactant intactId="EBI-372530">
        <id>Q9UHL9</id>
        <label>GTF2IRD1</label>
    </interactant>
    <organismsDiffer>true</organismsDiffer>
    <experiments>3</experiments>
</comment>
<comment type="subcellular location">
    <subcellularLocation>
        <location evidence="1">Nucleus</location>
    </subcellularLocation>
</comment>
<comment type="PTM">
    <text evidence="1">Automethylated.</text>
</comment>
<comment type="similarity">
    <text evidence="2">Belongs to the class V-like SAM-binding methyltransferase superfamily. Histone-lysine methyltransferase family. SETD6 subfamily.</text>
</comment>
<comment type="sequence caution" evidence="5">
    <conflict type="frameshift">
        <sequence resource="EMBL-CDS" id="BAC35846"/>
    </conflict>
</comment>
<feature type="chain" id="PRO_0000281890" description="N-lysine methyltransferase SETD6">
    <location>
        <begin position="1"/>
        <end position="473"/>
    </location>
</feature>
<feature type="domain" description="SET" evidence="2">
    <location>
        <begin position="62"/>
        <end position="286"/>
    </location>
</feature>
<feature type="region of interest" description="Disordered" evidence="3">
    <location>
        <begin position="1"/>
        <end position="23"/>
    </location>
</feature>
<feature type="binding site" evidence="1">
    <location>
        <begin position="73"/>
        <end position="75"/>
    </location>
    <ligand>
        <name>S-adenosyl-L-methionine</name>
        <dbReference type="ChEBI" id="CHEBI:59789"/>
    </ligand>
</feature>
<feature type="binding site" evidence="1">
    <location>
        <position position="122"/>
    </location>
    <ligand>
        <name>substrate</name>
    </ligand>
</feature>
<feature type="binding site" evidence="1">
    <location>
        <position position="223"/>
    </location>
    <ligand>
        <name>S-adenosyl-L-methionine</name>
        <dbReference type="ChEBI" id="CHEBI:59789"/>
    </ligand>
</feature>
<feature type="binding site" evidence="1">
    <location>
        <position position="224"/>
    </location>
    <ligand>
        <name>substrate</name>
    </ligand>
</feature>
<feature type="binding site" evidence="1">
    <location>
        <position position="226"/>
    </location>
    <ligand>
        <name>substrate</name>
    </ligand>
</feature>
<feature type="binding site" evidence="1">
    <location>
        <begin position="251"/>
        <end position="252"/>
    </location>
    <ligand>
        <name>S-adenosyl-L-methionine</name>
        <dbReference type="ChEBI" id="CHEBI:59789"/>
    </ligand>
</feature>
<feature type="binding site" evidence="1">
    <location>
        <position position="297"/>
    </location>
    <ligand>
        <name>S-adenosyl-L-methionine</name>
        <dbReference type="ChEBI" id="CHEBI:59789"/>
    </ligand>
</feature>
<feature type="modified residue" description="Phosphoserine" evidence="7">
    <location>
        <position position="14"/>
    </location>
</feature>
<feature type="modified residue" description="Phosphoserine" evidence="6 7">
    <location>
        <position position="22"/>
    </location>
</feature>
<feature type="modified residue" description="N6-methylated lysine; by autocatalysis" evidence="1">
    <location>
        <position position="63"/>
    </location>
</feature>
<feature type="modified residue" description="N6-methylated lysine; by autocatalysis" evidence="1">
    <location>
        <position position="179"/>
    </location>
</feature>
<feature type="modified residue" description="N6-methylated lysine; by autocatalysis" evidence="1">
    <location>
        <position position="372"/>
    </location>
</feature>
<feature type="sequence conflict" description="In Ref. 1; BAC35846." evidence="5" ref="1">
    <original>E</original>
    <variation>T</variation>
    <location>
        <position position="87"/>
    </location>
</feature>
<protein>
    <recommendedName>
        <fullName>N-lysine methyltransferase SETD6</fullName>
        <ecNumber evidence="1">2.1.1.-</ecNumber>
    </recommendedName>
    <alternativeName>
        <fullName>SET domain-containing protein 6</fullName>
    </alternativeName>
</protein>
<reference key="1">
    <citation type="journal article" date="2005" name="Science">
        <title>The transcriptional landscape of the mammalian genome.</title>
        <authorList>
            <person name="Carninci P."/>
            <person name="Kasukawa T."/>
            <person name="Katayama S."/>
            <person name="Gough J."/>
            <person name="Frith M.C."/>
            <person name="Maeda N."/>
            <person name="Oyama R."/>
            <person name="Ravasi T."/>
            <person name="Lenhard B."/>
            <person name="Wells C."/>
            <person name="Kodzius R."/>
            <person name="Shimokawa K."/>
            <person name="Bajic V.B."/>
            <person name="Brenner S.E."/>
            <person name="Batalov S."/>
            <person name="Forrest A.R."/>
            <person name="Zavolan M."/>
            <person name="Davis M.J."/>
            <person name="Wilming L.G."/>
            <person name="Aidinis V."/>
            <person name="Allen J.E."/>
            <person name="Ambesi-Impiombato A."/>
            <person name="Apweiler R."/>
            <person name="Aturaliya R.N."/>
            <person name="Bailey T.L."/>
            <person name="Bansal M."/>
            <person name="Baxter L."/>
            <person name="Beisel K.W."/>
            <person name="Bersano T."/>
            <person name="Bono H."/>
            <person name="Chalk A.M."/>
            <person name="Chiu K.P."/>
            <person name="Choudhary V."/>
            <person name="Christoffels A."/>
            <person name="Clutterbuck D.R."/>
            <person name="Crowe M.L."/>
            <person name="Dalla E."/>
            <person name="Dalrymple B.P."/>
            <person name="de Bono B."/>
            <person name="Della Gatta G."/>
            <person name="di Bernardo D."/>
            <person name="Down T."/>
            <person name="Engstrom P."/>
            <person name="Fagiolini M."/>
            <person name="Faulkner G."/>
            <person name="Fletcher C.F."/>
            <person name="Fukushima T."/>
            <person name="Furuno M."/>
            <person name="Futaki S."/>
            <person name="Gariboldi M."/>
            <person name="Georgii-Hemming P."/>
            <person name="Gingeras T.R."/>
            <person name="Gojobori T."/>
            <person name="Green R.E."/>
            <person name="Gustincich S."/>
            <person name="Harbers M."/>
            <person name="Hayashi Y."/>
            <person name="Hensch T.K."/>
            <person name="Hirokawa N."/>
            <person name="Hill D."/>
            <person name="Huminiecki L."/>
            <person name="Iacono M."/>
            <person name="Ikeo K."/>
            <person name="Iwama A."/>
            <person name="Ishikawa T."/>
            <person name="Jakt M."/>
            <person name="Kanapin A."/>
            <person name="Katoh M."/>
            <person name="Kawasawa Y."/>
            <person name="Kelso J."/>
            <person name="Kitamura H."/>
            <person name="Kitano H."/>
            <person name="Kollias G."/>
            <person name="Krishnan S.P."/>
            <person name="Kruger A."/>
            <person name="Kummerfeld S.K."/>
            <person name="Kurochkin I.V."/>
            <person name="Lareau L.F."/>
            <person name="Lazarevic D."/>
            <person name="Lipovich L."/>
            <person name="Liu J."/>
            <person name="Liuni S."/>
            <person name="McWilliam S."/>
            <person name="Madan Babu M."/>
            <person name="Madera M."/>
            <person name="Marchionni L."/>
            <person name="Matsuda H."/>
            <person name="Matsuzawa S."/>
            <person name="Miki H."/>
            <person name="Mignone F."/>
            <person name="Miyake S."/>
            <person name="Morris K."/>
            <person name="Mottagui-Tabar S."/>
            <person name="Mulder N."/>
            <person name="Nakano N."/>
            <person name="Nakauchi H."/>
            <person name="Ng P."/>
            <person name="Nilsson R."/>
            <person name="Nishiguchi S."/>
            <person name="Nishikawa S."/>
            <person name="Nori F."/>
            <person name="Ohara O."/>
            <person name="Okazaki Y."/>
            <person name="Orlando V."/>
            <person name="Pang K.C."/>
            <person name="Pavan W.J."/>
            <person name="Pavesi G."/>
            <person name="Pesole G."/>
            <person name="Petrovsky N."/>
            <person name="Piazza S."/>
            <person name="Reed J."/>
            <person name="Reid J.F."/>
            <person name="Ring B.Z."/>
            <person name="Ringwald M."/>
            <person name="Rost B."/>
            <person name="Ruan Y."/>
            <person name="Salzberg S.L."/>
            <person name="Sandelin A."/>
            <person name="Schneider C."/>
            <person name="Schoenbach C."/>
            <person name="Sekiguchi K."/>
            <person name="Semple C.A."/>
            <person name="Seno S."/>
            <person name="Sessa L."/>
            <person name="Sheng Y."/>
            <person name="Shibata Y."/>
            <person name="Shimada H."/>
            <person name="Shimada K."/>
            <person name="Silva D."/>
            <person name="Sinclair B."/>
            <person name="Sperling S."/>
            <person name="Stupka E."/>
            <person name="Sugiura K."/>
            <person name="Sultana R."/>
            <person name="Takenaka Y."/>
            <person name="Taki K."/>
            <person name="Tammoja K."/>
            <person name="Tan S.L."/>
            <person name="Tang S."/>
            <person name="Taylor M.S."/>
            <person name="Tegner J."/>
            <person name="Teichmann S.A."/>
            <person name="Ueda H.R."/>
            <person name="van Nimwegen E."/>
            <person name="Verardo R."/>
            <person name="Wei C.L."/>
            <person name="Yagi K."/>
            <person name="Yamanishi H."/>
            <person name="Zabarovsky E."/>
            <person name="Zhu S."/>
            <person name="Zimmer A."/>
            <person name="Hide W."/>
            <person name="Bult C."/>
            <person name="Grimmond S.M."/>
            <person name="Teasdale R.D."/>
            <person name="Liu E.T."/>
            <person name="Brusic V."/>
            <person name="Quackenbush J."/>
            <person name="Wahlestedt C."/>
            <person name="Mattick J.S."/>
            <person name="Hume D.A."/>
            <person name="Kai C."/>
            <person name="Sasaki D."/>
            <person name="Tomaru Y."/>
            <person name="Fukuda S."/>
            <person name="Kanamori-Katayama M."/>
            <person name="Suzuki M."/>
            <person name="Aoki J."/>
            <person name="Arakawa T."/>
            <person name="Iida J."/>
            <person name="Imamura K."/>
            <person name="Itoh M."/>
            <person name="Kato T."/>
            <person name="Kawaji H."/>
            <person name="Kawagashira N."/>
            <person name="Kawashima T."/>
            <person name="Kojima M."/>
            <person name="Kondo S."/>
            <person name="Konno H."/>
            <person name="Nakano K."/>
            <person name="Ninomiya N."/>
            <person name="Nishio T."/>
            <person name="Okada M."/>
            <person name="Plessy C."/>
            <person name="Shibata K."/>
            <person name="Shiraki T."/>
            <person name="Suzuki S."/>
            <person name="Tagami M."/>
            <person name="Waki K."/>
            <person name="Watahiki A."/>
            <person name="Okamura-Oho Y."/>
            <person name="Suzuki H."/>
            <person name="Kawai J."/>
            <person name="Hayashizaki Y."/>
        </authorList>
    </citation>
    <scope>NUCLEOTIDE SEQUENCE [LARGE SCALE MRNA]</scope>
    <source>
        <strain>BALB/cJ</strain>
        <strain>C57BL/6J</strain>
        <tissue>Kidney</tissue>
    </source>
</reference>
<reference key="2">
    <citation type="submission" date="2005-07" db="EMBL/GenBank/DDBJ databases">
        <authorList>
            <person name="Mural R.J."/>
            <person name="Adams M.D."/>
            <person name="Myers E.W."/>
            <person name="Smith H.O."/>
            <person name="Venter J.C."/>
        </authorList>
    </citation>
    <scope>NUCLEOTIDE SEQUENCE [LARGE SCALE GENOMIC DNA]</scope>
</reference>
<reference key="3">
    <citation type="journal article" date="2004" name="Genome Res.">
        <title>The status, quality, and expansion of the NIH full-length cDNA project: the Mammalian Gene Collection (MGC).</title>
        <authorList>
            <consortium name="The MGC Project Team"/>
        </authorList>
    </citation>
    <scope>NUCLEOTIDE SEQUENCE [LARGE SCALE MRNA]</scope>
    <source>
        <tissue>Brain</tissue>
    </source>
</reference>
<reference key="4">
    <citation type="journal article" date="2007" name="Proc. Natl. Acad. Sci. U.S.A.">
        <title>Large-scale phosphorylation analysis of mouse liver.</title>
        <authorList>
            <person name="Villen J."/>
            <person name="Beausoleil S.A."/>
            <person name="Gerber S.A."/>
            <person name="Gygi S.P."/>
        </authorList>
    </citation>
    <scope>PHOSPHORYLATION [LARGE SCALE ANALYSIS] AT SER-22</scope>
    <scope>IDENTIFICATION BY MASS SPECTROMETRY [LARGE SCALE ANALYSIS]</scope>
    <source>
        <tissue>Liver</tissue>
    </source>
</reference>
<reference key="5">
    <citation type="journal article" date="2010" name="Cell">
        <title>A tissue-specific atlas of mouse protein phosphorylation and expression.</title>
        <authorList>
            <person name="Huttlin E.L."/>
            <person name="Jedrychowski M.P."/>
            <person name="Elias J.E."/>
            <person name="Goswami T."/>
            <person name="Rad R."/>
            <person name="Beausoleil S.A."/>
            <person name="Villen J."/>
            <person name="Haas W."/>
            <person name="Sowa M.E."/>
            <person name="Gygi S.P."/>
        </authorList>
    </citation>
    <scope>PHOSPHORYLATION [LARGE SCALE ANALYSIS] AT SER-14 AND SER-22</scope>
    <scope>IDENTIFICATION BY MASS SPECTROMETRY [LARGE SCALE ANALYSIS]</scope>
    <source>
        <tissue>Heart</tissue>
        <tissue>Kidney</tissue>
        <tissue>Liver</tissue>
        <tissue>Testis</tissue>
    </source>
</reference>
<reference key="6">
    <citation type="journal article" date="2013" name="Epigenetics">
        <title>SETD6 monomethylates H2AZ on lysine 7 and is required for the maintenance of embryonic stem cell self-renewal.</title>
        <authorList>
            <person name="Binda O."/>
            <person name="Sevilla A."/>
            <person name="LeRoy G."/>
            <person name="Lemischka I.R."/>
            <person name="Garcia B.A."/>
            <person name="Richard S."/>
        </authorList>
    </citation>
    <scope>FUNCTION</scope>
</reference>
<sequence>MAAPAKRARVSGGSPLVAPCPSPRAARAPLPLPAGSSGGEPEGDAVAGFLRWCRRVGLELSPKVTVSRQGTVAGYGMVARESVRAGELLFAVPRSALLSPHTCSISGLLERERGALQSLSGWVPLLLALLHELQAPASPWSPYFALWPELGRLEHPMFWPEEERLRLLKGTGVPEAVEKDLVNIRSEYYSIVLPFMEAHSDLFSPSVRSLELYQQLVALVMAYSFQEPLEEDDDEKEPNSPLMVPAADILNHIANHNANLEYSADYLRMVATQPILEGHEIFNTYGQMANWQLIHMYGFAEPYPNNTDDTADIQMVTVRDAALQGTKDETEKLLVCERWDFLCKQEMVGEEGAFVIGCEEVLTEEELATTLKVLCMPAEEFRDYKERAGWGEEETEDDSLAITDIPKLQESWKRLLRNSVLLTLQTYTTDLKTDQDLLSNKEAYATLSWREQQALQVRYGQKMILHRVLELTN</sequence>
<evidence type="ECO:0000250" key="1">
    <source>
        <dbReference type="UniProtKB" id="Q8TBK2"/>
    </source>
</evidence>
<evidence type="ECO:0000255" key="2">
    <source>
        <dbReference type="PROSITE-ProRule" id="PRU00190"/>
    </source>
</evidence>
<evidence type="ECO:0000256" key="3">
    <source>
        <dbReference type="SAM" id="MobiDB-lite"/>
    </source>
</evidence>
<evidence type="ECO:0000269" key="4">
    <source>
    </source>
</evidence>
<evidence type="ECO:0000305" key="5"/>
<evidence type="ECO:0007744" key="6">
    <source>
    </source>
</evidence>
<evidence type="ECO:0007744" key="7">
    <source>
    </source>
</evidence>
<keyword id="KW-0488">Methylation</keyword>
<keyword id="KW-0489">Methyltransferase</keyword>
<keyword id="KW-0539">Nucleus</keyword>
<keyword id="KW-0597">Phosphoprotein</keyword>
<keyword id="KW-1185">Reference proteome</keyword>
<keyword id="KW-0949">S-adenosyl-L-methionine</keyword>
<keyword id="KW-0808">Transferase</keyword>
<organism>
    <name type="scientific">Mus musculus</name>
    <name type="common">Mouse</name>
    <dbReference type="NCBI Taxonomy" id="10090"/>
    <lineage>
        <taxon>Eukaryota</taxon>
        <taxon>Metazoa</taxon>
        <taxon>Chordata</taxon>
        <taxon>Craniata</taxon>
        <taxon>Vertebrata</taxon>
        <taxon>Euteleostomi</taxon>
        <taxon>Mammalia</taxon>
        <taxon>Eutheria</taxon>
        <taxon>Euarchontoglires</taxon>
        <taxon>Glires</taxon>
        <taxon>Rodentia</taxon>
        <taxon>Myomorpha</taxon>
        <taxon>Muroidea</taxon>
        <taxon>Muridae</taxon>
        <taxon>Murinae</taxon>
        <taxon>Mus</taxon>
        <taxon>Mus</taxon>
    </lineage>
</organism>
<accession>Q9CWY3</accession>
<accession>B2RTA7</accession>
<accession>Q8C6I1</accession>
<proteinExistence type="evidence at protein level"/>
<name>SETD6_MOUSE</name>
<gene>
    <name type="primary">Setd6</name>
</gene>
<dbReference type="EC" id="2.1.1.-" evidence="1"/>
<dbReference type="EMBL" id="AK010304">
    <property type="protein sequence ID" value="BAB26837.1"/>
    <property type="molecule type" value="mRNA"/>
</dbReference>
<dbReference type="EMBL" id="AK075597">
    <property type="protein sequence ID" value="BAC35846.1"/>
    <property type="status" value="ALT_FRAME"/>
    <property type="molecule type" value="mRNA"/>
</dbReference>
<dbReference type="EMBL" id="AK167753">
    <property type="protein sequence ID" value="BAE39788.1"/>
    <property type="molecule type" value="mRNA"/>
</dbReference>
<dbReference type="EMBL" id="CH466525">
    <property type="protein sequence ID" value="EDL11181.1"/>
    <property type="molecule type" value="Genomic_DNA"/>
</dbReference>
<dbReference type="EMBL" id="BC139198">
    <property type="protein sequence ID" value="AAI39199.1"/>
    <property type="molecule type" value="mRNA"/>
</dbReference>
<dbReference type="EMBL" id="BC139199">
    <property type="protein sequence ID" value="AAI39200.1"/>
    <property type="molecule type" value="mRNA"/>
</dbReference>
<dbReference type="CCDS" id="CCDS22566.1"/>
<dbReference type="RefSeq" id="NP_001030295.1">
    <property type="nucleotide sequence ID" value="NM_001035123.4"/>
</dbReference>
<dbReference type="SMR" id="Q9CWY3"/>
<dbReference type="BioGRID" id="426098">
    <property type="interactions" value="1"/>
</dbReference>
<dbReference type="FunCoup" id="Q9CWY3">
    <property type="interactions" value="2345"/>
</dbReference>
<dbReference type="IntAct" id="Q9CWY3">
    <property type="interactions" value="2"/>
</dbReference>
<dbReference type="MINT" id="Q9CWY3"/>
<dbReference type="STRING" id="10090.ENSMUSP00000034096"/>
<dbReference type="iPTMnet" id="Q9CWY3"/>
<dbReference type="PhosphoSitePlus" id="Q9CWY3"/>
<dbReference type="PaxDb" id="10090-ENSMUSP00000034096"/>
<dbReference type="PeptideAtlas" id="Q9CWY3"/>
<dbReference type="ProteomicsDB" id="257127"/>
<dbReference type="Pumba" id="Q9CWY3"/>
<dbReference type="Antibodypedia" id="48742">
    <property type="antibodies" value="138 antibodies from 26 providers"/>
</dbReference>
<dbReference type="DNASU" id="66083"/>
<dbReference type="Ensembl" id="ENSMUST00000034096.6">
    <property type="protein sequence ID" value="ENSMUSP00000034096.5"/>
    <property type="gene ID" value="ENSMUSG00000031671.12"/>
</dbReference>
<dbReference type="GeneID" id="66083"/>
<dbReference type="KEGG" id="mmu:66083"/>
<dbReference type="UCSC" id="uc009myv.1">
    <property type="organism name" value="mouse"/>
</dbReference>
<dbReference type="AGR" id="MGI:1913333"/>
<dbReference type="CTD" id="79918"/>
<dbReference type="MGI" id="MGI:1913333">
    <property type="gene designation" value="Setd6"/>
</dbReference>
<dbReference type="VEuPathDB" id="HostDB:ENSMUSG00000031671"/>
<dbReference type="eggNOG" id="KOG1338">
    <property type="taxonomic scope" value="Eukaryota"/>
</dbReference>
<dbReference type="GeneTree" id="ENSGT00940000153577"/>
<dbReference type="HOGENOM" id="CLU_017135_2_0_1"/>
<dbReference type="InParanoid" id="Q9CWY3"/>
<dbReference type="OMA" id="RVDWWLE"/>
<dbReference type="OrthoDB" id="341421at2759"/>
<dbReference type="PhylomeDB" id="Q9CWY3"/>
<dbReference type="TreeFam" id="TF106399"/>
<dbReference type="Reactome" id="R-MMU-3214841">
    <property type="pathway name" value="PKMTs methylate histone lysines"/>
</dbReference>
<dbReference type="BioGRID-ORCS" id="66083">
    <property type="hits" value="2 hits in 83 CRISPR screens"/>
</dbReference>
<dbReference type="ChiTaRS" id="Setd6">
    <property type="organism name" value="mouse"/>
</dbReference>
<dbReference type="PRO" id="PR:Q9CWY3"/>
<dbReference type="Proteomes" id="UP000000589">
    <property type="component" value="Chromosome 8"/>
</dbReference>
<dbReference type="RNAct" id="Q9CWY3">
    <property type="molecule type" value="protein"/>
</dbReference>
<dbReference type="Bgee" id="ENSMUSG00000031671">
    <property type="expression patterns" value="Expressed in otic placode and 262 other cell types or tissues"/>
</dbReference>
<dbReference type="ExpressionAtlas" id="Q9CWY3">
    <property type="expression patterns" value="baseline and differential"/>
</dbReference>
<dbReference type="GO" id="GO:0005829">
    <property type="term" value="C:cytosol"/>
    <property type="evidence" value="ECO:0007669"/>
    <property type="project" value="Ensembl"/>
</dbReference>
<dbReference type="GO" id="GO:0005654">
    <property type="term" value="C:nucleoplasm"/>
    <property type="evidence" value="ECO:0007669"/>
    <property type="project" value="Ensembl"/>
</dbReference>
<dbReference type="GO" id="GO:0005634">
    <property type="term" value="C:nucleus"/>
    <property type="evidence" value="ECO:0000250"/>
    <property type="project" value="UniProtKB"/>
</dbReference>
<dbReference type="GO" id="GO:0051059">
    <property type="term" value="F:NF-kappaB binding"/>
    <property type="evidence" value="ECO:0007669"/>
    <property type="project" value="Ensembl"/>
</dbReference>
<dbReference type="GO" id="GO:0016279">
    <property type="term" value="F:protein-lysine N-methyltransferase activity"/>
    <property type="evidence" value="ECO:0000250"/>
    <property type="project" value="UniProtKB"/>
</dbReference>
<dbReference type="GO" id="GO:1904047">
    <property type="term" value="F:S-adenosyl-L-methionine binding"/>
    <property type="evidence" value="ECO:0000250"/>
    <property type="project" value="UniProtKB"/>
</dbReference>
<dbReference type="GO" id="GO:0032088">
    <property type="term" value="P:negative regulation of NF-kappaB transcription factor activity"/>
    <property type="evidence" value="ECO:0000250"/>
    <property type="project" value="UniProtKB"/>
</dbReference>
<dbReference type="GO" id="GO:0018026">
    <property type="term" value="P:peptidyl-lysine monomethylation"/>
    <property type="evidence" value="ECO:0000250"/>
    <property type="project" value="UniProtKB"/>
</dbReference>
<dbReference type="GO" id="GO:0050727">
    <property type="term" value="P:regulation of inflammatory response"/>
    <property type="evidence" value="ECO:0000250"/>
    <property type="project" value="UniProtKB"/>
</dbReference>
<dbReference type="GO" id="GO:0048863">
    <property type="term" value="P:stem cell differentiation"/>
    <property type="evidence" value="ECO:0000314"/>
    <property type="project" value="UniProtKB"/>
</dbReference>
<dbReference type="GO" id="GO:0019827">
    <property type="term" value="P:stem cell population maintenance"/>
    <property type="evidence" value="ECO:0000314"/>
    <property type="project" value="UniProtKB"/>
</dbReference>
<dbReference type="CDD" id="cd19178">
    <property type="entry name" value="SET_SETD6"/>
    <property type="match status" value="1"/>
</dbReference>
<dbReference type="FunFam" id="3.90.1410.10:FF:000004">
    <property type="entry name" value="N-lysine methyltransferase SETD6"/>
    <property type="match status" value="1"/>
</dbReference>
<dbReference type="FunFam" id="3.90.1420.10:FF:000002">
    <property type="entry name" value="N-lysine methyltransferase SETD6"/>
    <property type="match status" value="1"/>
</dbReference>
<dbReference type="Gene3D" id="3.90.1420.10">
    <property type="entry name" value="Rubisco LSMT, substrate-binding domain"/>
    <property type="match status" value="1"/>
</dbReference>
<dbReference type="Gene3D" id="3.90.1410.10">
    <property type="entry name" value="set domain protein methyltransferase, domain 1"/>
    <property type="match status" value="1"/>
</dbReference>
<dbReference type="InterPro" id="IPR011383">
    <property type="entry name" value="N-lys_methylase_SETD6"/>
</dbReference>
<dbReference type="InterPro" id="IPR015353">
    <property type="entry name" value="Rubisco_LSMT_subst-bd"/>
</dbReference>
<dbReference type="InterPro" id="IPR036464">
    <property type="entry name" value="Rubisco_LSMT_subst-bd_sf"/>
</dbReference>
<dbReference type="InterPro" id="IPR001214">
    <property type="entry name" value="SET_dom"/>
</dbReference>
<dbReference type="InterPro" id="IPR046341">
    <property type="entry name" value="SET_dom_sf"/>
</dbReference>
<dbReference type="InterPro" id="IPR050600">
    <property type="entry name" value="SETD3_SETD6_MTase"/>
</dbReference>
<dbReference type="InterPro" id="IPR044430">
    <property type="entry name" value="SETD6_SET"/>
</dbReference>
<dbReference type="PANTHER" id="PTHR13271:SF34">
    <property type="entry name" value="N-LYSINE METHYLTRANSFERASE SETD6"/>
    <property type="match status" value="1"/>
</dbReference>
<dbReference type="PANTHER" id="PTHR13271">
    <property type="entry name" value="UNCHARACTERIZED PUTATIVE METHYLTRANSFERASE"/>
    <property type="match status" value="1"/>
</dbReference>
<dbReference type="Pfam" id="PF09273">
    <property type="entry name" value="Rubis-subs-bind"/>
    <property type="match status" value="1"/>
</dbReference>
<dbReference type="Pfam" id="PF00856">
    <property type="entry name" value="SET"/>
    <property type="match status" value="1"/>
</dbReference>
<dbReference type="PIRSF" id="PIRSF011771">
    <property type="entry name" value="RMS1_SET"/>
    <property type="match status" value="1"/>
</dbReference>
<dbReference type="SUPFAM" id="SSF81822">
    <property type="entry name" value="RuBisCo LSMT C-terminal, substrate-binding domain"/>
    <property type="match status" value="1"/>
</dbReference>
<dbReference type="SUPFAM" id="SSF82199">
    <property type="entry name" value="SET domain"/>
    <property type="match status" value="1"/>
</dbReference>
<dbReference type="PROSITE" id="PS50280">
    <property type="entry name" value="SET"/>
    <property type="match status" value="1"/>
</dbReference>